<sequence>MVKETTYYDVLGVKPNATQEELKKAYRKLALKYHPDKNPNEGEKFKQISQAYEVLSDAKKRELYDKGGEQAIKEGGAGGGFGSPMDIFDMFFGGGGRMQRERRGKNVVHQLSVTLEDLYNGATRKLALQKNVICDKCEGRGGKKGAVECCPNCRGTGMQIRIHQIGPGMVQQIQSVCMECQGHGERISPKDRCKSCNGRKIVREKKILEVHIDKGMKDGQKITFHGEGDQEPGLEPGDIIIVLDQKDHAVFTRRGEDLFMCMDIQLVEALCGFQKPISTLDNRTIVITSHPGQIVKHGDIKCVLNEGMPIYRRPYEKGRLIIEFKINFPENGFLSPDKLSLLEKLLPERKEVEETDEMDQVELVDFDPNQERRRHYNGEAYEDDEHHPRGGVQCQTS</sequence>
<dbReference type="EMBL" id="AF395203">
    <property type="protein sequence ID" value="AAK81721.1"/>
    <property type="molecule type" value="mRNA"/>
</dbReference>
<dbReference type="SMR" id="Q95JF4"/>
<dbReference type="CORUM" id="Q95JF4"/>
<dbReference type="GO" id="GO:0005783">
    <property type="term" value="C:endoplasmic reticulum"/>
    <property type="evidence" value="ECO:0007669"/>
    <property type="project" value="UniProtKB-KW"/>
</dbReference>
<dbReference type="GO" id="GO:0016020">
    <property type="term" value="C:membrane"/>
    <property type="evidence" value="ECO:0007669"/>
    <property type="project" value="UniProtKB-SubCell"/>
</dbReference>
<dbReference type="GO" id="GO:0005739">
    <property type="term" value="C:mitochondrion"/>
    <property type="evidence" value="ECO:0007669"/>
    <property type="project" value="UniProtKB-SubCell"/>
</dbReference>
<dbReference type="GO" id="GO:0005634">
    <property type="term" value="C:nucleus"/>
    <property type="evidence" value="ECO:0007669"/>
    <property type="project" value="UniProtKB-SubCell"/>
</dbReference>
<dbReference type="GO" id="GO:0048471">
    <property type="term" value="C:perinuclear region of cytoplasm"/>
    <property type="evidence" value="ECO:0007669"/>
    <property type="project" value="UniProtKB-SubCell"/>
</dbReference>
<dbReference type="GO" id="GO:0005524">
    <property type="term" value="F:ATP binding"/>
    <property type="evidence" value="ECO:0007669"/>
    <property type="project" value="InterPro"/>
</dbReference>
<dbReference type="GO" id="GO:0001671">
    <property type="term" value="F:ATPase activator activity"/>
    <property type="evidence" value="ECO:0000250"/>
    <property type="project" value="UniProtKB"/>
</dbReference>
<dbReference type="GO" id="GO:0030544">
    <property type="term" value="F:Hsp70 protein binding"/>
    <property type="evidence" value="ECO:0000250"/>
    <property type="project" value="UniProtKB"/>
</dbReference>
<dbReference type="GO" id="GO:0051087">
    <property type="term" value="F:protein-folding chaperone binding"/>
    <property type="evidence" value="ECO:0000250"/>
    <property type="project" value="UniProtKB"/>
</dbReference>
<dbReference type="GO" id="GO:0051082">
    <property type="term" value="F:unfolded protein binding"/>
    <property type="evidence" value="ECO:0007669"/>
    <property type="project" value="InterPro"/>
</dbReference>
<dbReference type="GO" id="GO:0008270">
    <property type="term" value="F:zinc ion binding"/>
    <property type="evidence" value="ECO:0007669"/>
    <property type="project" value="UniProtKB-KW"/>
</dbReference>
<dbReference type="GO" id="GO:0043066">
    <property type="term" value="P:negative regulation of apoptotic process"/>
    <property type="evidence" value="ECO:0000250"/>
    <property type="project" value="UniProtKB"/>
</dbReference>
<dbReference type="GO" id="GO:0043508">
    <property type="term" value="P:negative regulation of JUN kinase activity"/>
    <property type="evidence" value="ECO:0000250"/>
    <property type="project" value="UniProtKB"/>
</dbReference>
<dbReference type="GO" id="GO:0043065">
    <property type="term" value="P:positive regulation of apoptotic process"/>
    <property type="evidence" value="ECO:0000250"/>
    <property type="project" value="UniProtKB"/>
</dbReference>
<dbReference type="GO" id="GO:0006457">
    <property type="term" value="P:protein folding"/>
    <property type="evidence" value="ECO:0007669"/>
    <property type="project" value="InterPro"/>
</dbReference>
<dbReference type="GO" id="GO:0070585">
    <property type="term" value="P:protein localization to mitochondrion"/>
    <property type="evidence" value="ECO:0000250"/>
    <property type="project" value="UniProtKB"/>
</dbReference>
<dbReference type="GO" id="GO:0051223">
    <property type="term" value="P:regulation of protein transport"/>
    <property type="evidence" value="ECO:0000250"/>
    <property type="project" value="UniProtKB"/>
</dbReference>
<dbReference type="GO" id="GO:0009408">
    <property type="term" value="P:response to heat"/>
    <property type="evidence" value="ECO:0007669"/>
    <property type="project" value="InterPro"/>
</dbReference>
<dbReference type="CDD" id="cd06257">
    <property type="entry name" value="DnaJ"/>
    <property type="match status" value="1"/>
</dbReference>
<dbReference type="CDD" id="cd10747">
    <property type="entry name" value="DnaJ_C"/>
    <property type="match status" value="1"/>
</dbReference>
<dbReference type="CDD" id="cd10719">
    <property type="entry name" value="DnaJ_zf"/>
    <property type="match status" value="1"/>
</dbReference>
<dbReference type="FunFam" id="2.60.260.20:FF:000068">
    <property type="entry name" value="Chaperone protein dnaJ 3"/>
    <property type="match status" value="1"/>
</dbReference>
<dbReference type="FunFam" id="2.10.230.10:FF:000005">
    <property type="entry name" value="DnaJ homolog subfamily A member 1"/>
    <property type="match status" value="1"/>
</dbReference>
<dbReference type="FunFam" id="1.10.287.110:FF:000014">
    <property type="entry name" value="dnaJ homolog subfamily A member 1"/>
    <property type="match status" value="1"/>
</dbReference>
<dbReference type="FunFam" id="2.60.260.20:FF:000003">
    <property type="entry name" value="DnaJ subfamily A member 2"/>
    <property type="match status" value="1"/>
</dbReference>
<dbReference type="Gene3D" id="1.10.287.110">
    <property type="entry name" value="DnaJ domain"/>
    <property type="match status" value="1"/>
</dbReference>
<dbReference type="Gene3D" id="2.10.230.10">
    <property type="entry name" value="Heat shock protein DnaJ, cysteine-rich domain"/>
    <property type="match status" value="1"/>
</dbReference>
<dbReference type="Gene3D" id="2.60.260.20">
    <property type="entry name" value="Urease metallochaperone UreE, N-terminal domain"/>
    <property type="match status" value="2"/>
</dbReference>
<dbReference type="HAMAP" id="MF_01152">
    <property type="entry name" value="DnaJ"/>
    <property type="match status" value="1"/>
</dbReference>
<dbReference type="InterPro" id="IPR012724">
    <property type="entry name" value="DnaJ"/>
</dbReference>
<dbReference type="InterPro" id="IPR002939">
    <property type="entry name" value="DnaJ_C"/>
</dbReference>
<dbReference type="InterPro" id="IPR001623">
    <property type="entry name" value="DnaJ_domain"/>
</dbReference>
<dbReference type="InterPro" id="IPR018253">
    <property type="entry name" value="DnaJ_domain_CS"/>
</dbReference>
<dbReference type="InterPro" id="IPR044713">
    <property type="entry name" value="DNJA1/2-like"/>
</dbReference>
<dbReference type="InterPro" id="IPR008971">
    <property type="entry name" value="HSP40/DnaJ_pept-bd"/>
</dbReference>
<dbReference type="InterPro" id="IPR001305">
    <property type="entry name" value="HSP_DnaJ_Cys-rich_dom"/>
</dbReference>
<dbReference type="InterPro" id="IPR036410">
    <property type="entry name" value="HSP_DnaJ_Cys-rich_dom_sf"/>
</dbReference>
<dbReference type="InterPro" id="IPR036869">
    <property type="entry name" value="J_dom_sf"/>
</dbReference>
<dbReference type="PANTHER" id="PTHR43888">
    <property type="entry name" value="DNAJ-LIKE-2, ISOFORM A-RELATED"/>
    <property type="match status" value="1"/>
</dbReference>
<dbReference type="Pfam" id="PF00226">
    <property type="entry name" value="DnaJ"/>
    <property type="match status" value="1"/>
</dbReference>
<dbReference type="Pfam" id="PF01556">
    <property type="entry name" value="DnaJ_C"/>
    <property type="match status" value="1"/>
</dbReference>
<dbReference type="Pfam" id="PF00684">
    <property type="entry name" value="DnaJ_CXXCXGXG"/>
    <property type="match status" value="1"/>
</dbReference>
<dbReference type="PRINTS" id="PR00625">
    <property type="entry name" value="JDOMAIN"/>
</dbReference>
<dbReference type="SMART" id="SM00271">
    <property type="entry name" value="DnaJ"/>
    <property type="match status" value="1"/>
</dbReference>
<dbReference type="SUPFAM" id="SSF46565">
    <property type="entry name" value="Chaperone J-domain"/>
    <property type="match status" value="1"/>
</dbReference>
<dbReference type="SUPFAM" id="SSF57938">
    <property type="entry name" value="DnaJ/Hsp40 cysteine-rich domain"/>
    <property type="match status" value="1"/>
</dbReference>
<dbReference type="SUPFAM" id="SSF49493">
    <property type="entry name" value="HSP40/DnaJ peptide-binding domain"/>
    <property type="match status" value="2"/>
</dbReference>
<dbReference type="PROSITE" id="PS00636">
    <property type="entry name" value="DNAJ_1"/>
    <property type="match status" value="1"/>
</dbReference>
<dbReference type="PROSITE" id="PS50076">
    <property type="entry name" value="DNAJ_2"/>
    <property type="match status" value="1"/>
</dbReference>
<dbReference type="PROSITE" id="PS51188">
    <property type="entry name" value="ZF_CR"/>
    <property type="match status" value="1"/>
</dbReference>
<accession>Q95JF4</accession>
<keyword id="KW-0007">Acetylation</keyword>
<keyword id="KW-0143">Chaperone</keyword>
<keyword id="KW-0963">Cytoplasm</keyword>
<keyword id="KW-0256">Endoplasmic reticulum</keyword>
<keyword id="KW-0449">Lipoprotein</keyword>
<keyword id="KW-0472">Membrane</keyword>
<keyword id="KW-0479">Metal-binding</keyword>
<keyword id="KW-0488">Methylation</keyword>
<keyword id="KW-0492">Microsome</keyword>
<keyword id="KW-0496">Mitochondrion</keyword>
<keyword id="KW-0539">Nucleus</keyword>
<keyword id="KW-0597">Phosphoprotein</keyword>
<keyword id="KW-0636">Prenylation</keyword>
<keyword id="KW-0677">Repeat</keyword>
<keyword id="KW-0862">Zinc</keyword>
<keyword id="KW-0863">Zinc-finger</keyword>
<gene>
    <name type="primary">DNAJA1</name>
</gene>
<proteinExistence type="evidence at transcript level"/>
<feature type="chain" id="PRO_0000328580" description="DnaJ homolog subfamily A member 1">
    <location>
        <begin position="1"/>
        <end position="394"/>
    </location>
</feature>
<feature type="propeptide" id="PRO_0000396752" description="Removed in mature form" evidence="1">
    <location>
        <begin position="395"/>
        <end position="397"/>
    </location>
</feature>
<feature type="domain" description="J">
    <location>
        <begin position="6"/>
        <end position="68"/>
    </location>
</feature>
<feature type="repeat" description="CXXCXGXG motif">
    <location>
        <begin position="134"/>
        <end position="141"/>
    </location>
</feature>
<feature type="repeat" description="CXXCXGXG motif">
    <location>
        <begin position="150"/>
        <end position="157"/>
    </location>
</feature>
<feature type="repeat" description="CXXCXGXG motif">
    <location>
        <begin position="177"/>
        <end position="184"/>
    </location>
</feature>
<feature type="repeat" description="CXXCXGXG motif">
    <location>
        <begin position="193"/>
        <end position="200"/>
    </location>
</feature>
<feature type="zinc finger region" description="CR-type">
    <location>
        <begin position="121"/>
        <end position="205"/>
    </location>
</feature>
<feature type="region of interest" description="Disordered" evidence="3">
    <location>
        <begin position="352"/>
        <end position="397"/>
    </location>
</feature>
<feature type="compositionally biased region" description="Acidic residues" evidence="3">
    <location>
        <begin position="353"/>
        <end position="365"/>
    </location>
</feature>
<feature type="binding site" evidence="1">
    <location>
        <position position="134"/>
    </location>
    <ligand>
        <name>Zn(2+)</name>
        <dbReference type="ChEBI" id="CHEBI:29105"/>
        <label>1</label>
    </ligand>
</feature>
<feature type="binding site" evidence="1">
    <location>
        <position position="137"/>
    </location>
    <ligand>
        <name>Zn(2+)</name>
        <dbReference type="ChEBI" id="CHEBI:29105"/>
        <label>1</label>
    </ligand>
</feature>
<feature type="binding site" evidence="1">
    <location>
        <position position="150"/>
    </location>
    <ligand>
        <name>Zn(2+)</name>
        <dbReference type="ChEBI" id="CHEBI:29105"/>
        <label>2</label>
    </ligand>
</feature>
<feature type="binding site" evidence="1">
    <location>
        <position position="153"/>
    </location>
    <ligand>
        <name>Zn(2+)</name>
        <dbReference type="ChEBI" id="CHEBI:29105"/>
        <label>2</label>
    </ligand>
</feature>
<feature type="binding site" evidence="1">
    <location>
        <position position="177"/>
    </location>
    <ligand>
        <name>Zn(2+)</name>
        <dbReference type="ChEBI" id="CHEBI:29105"/>
        <label>2</label>
    </ligand>
</feature>
<feature type="binding site" evidence="1">
    <location>
        <position position="180"/>
    </location>
    <ligand>
        <name>Zn(2+)</name>
        <dbReference type="ChEBI" id="CHEBI:29105"/>
        <label>2</label>
    </ligand>
</feature>
<feature type="binding site" evidence="1">
    <location>
        <position position="193"/>
    </location>
    <ligand>
        <name>Zn(2+)</name>
        <dbReference type="ChEBI" id="CHEBI:29105"/>
        <label>1</label>
    </ligand>
</feature>
<feature type="binding site" evidence="1">
    <location>
        <position position="196"/>
    </location>
    <ligand>
        <name>Zn(2+)</name>
        <dbReference type="ChEBI" id="CHEBI:29105"/>
        <label>1</label>
    </ligand>
</feature>
<feature type="modified residue" description="N6-acetyllysine" evidence="2">
    <location>
        <position position="66"/>
    </location>
</feature>
<feature type="modified residue" description="Phosphoserine" evidence="2">
    <location>
        <position position="83"/>
    </location>
</feature>
<feature type="modified residue" description="Phosphoserine" evidence="2">
    <location>
        <position position="335"/>
    </location>
</feature>
<feature type="modified residue" description="Phosphotyrosine" evidence="2">
    <location>
        <position position="381"/>
    </location>
</feature>
<feature type="modified residue" description="Cysteine methyl ester" evidence="1">
    <location>
        <position position="394"/>
    </location>
</feature>
<feature type="lipid moiety-binding region" description="S-farnesyl cysteine" evidence="1">
    <location>
        <position position="394"/>
    </location>
</feature>
<evidence type="ECO:0000250" key="1"/>
<evidence type="ECO:0000250" key="2">
    <source>
        <dbReference type="UniProtKB" id="P31689"/>
    </source>
</evidence>
<evidence type="ECO:0000256" key="3">
    <source>
        <dbReference type="SAM" id="MobiDB-lite"/>
    </source>
</evidence>
<evidence type="ECO:0000269" key="4">
    <source>
    </source>
</evidence>
<protein>
    <recommendedName>
        <fullName>DnaJ homolog subfamily A member 1</fullName>
    </recommendedName>
    <alternativeName>
        <fullName>DnaJ protein homolog 2</fullName>
        <shortName>DJ-2</shortName>
    </alternativeName>
    <alternativeName>
        <fullName>Mydj2</fullName>
    </alternativeName>
</protein>
<comment type="function">
    <text evidence="1 4">Co-chaperone for HSPA8/Hsc70. Plays a role in protein transport into mitochondria via its role as co-chaperone. Functions as co-chaperone for HSPA1B and negatively regulates the translocation of BAX from the cytosol to mitochondria in response to cellular stress, thereby protecting cells against apoptosis. Stimulates ATP hydrolysis, but not the folding of unfolded proteins mediated by HSPA1A (in vitro). Promotes apoptosis in response to cellular stress mediated by exposure to anisomycin or UV (By similarity).</text>
</comment>
<comment type="subunit">
    <text evidence="2">Identified in a complex with HSPA1B and BAX. Interacts with RNF207.</text>
</comment>
<comment type="subcellular location">
    <subcellularLocation>
        <location evidence="1">Membrane</location>
        <topology evidence="1">Lipid-anchor</topology>
    </subcellularLocation>
    <subcellularLocation>
        <location evidence="1">Cytoplasm</location>
    </subcellularLocation>
    <subcellularLocation>
        <location evidence="1">Microsome</location>
    </subcellularLocation>
    <subcellularLocation>
        <location evidence="1">Mitochondrion</location>
    </subcellularLocation>
    <subcellularLocation>
        <location evidence="1">Nucleus</location>
    </subcellularLocation>
    <subcellularLocation>
        <location evidence="1">Cytoplasm</location>
        <location evidence="1">Perinuclear region</location>
    </subcellularLocation>
    <text evidence="1">Primarily cytoplasmic and associated with microsomes. A minor proportion is associated with nuclei and mitochondria (By similarity).</text>
</comment>
<organism>
    <name type="scientific">Chlorocebus aethiops</name>
    <name type="common">Green monkey</name>
    <name type="synonym">Cercopithecus aethiops</name>
    <dbReference type="NCBI Taxonomy" id="9534"/>
    <lineage>
        <taxon>Eukaryota</taxon>
        <taxon>Metazoa</taxon>
        <taxon>Chordata</taxon>
        <taxon>Craniata</taxon>
        <taxon>Vertebrata</taxon>
        <taxon>Euteleostomi</taxon>
        <taxon>Mammalia</taxon>
        <taxon>Eutheria</taxon>
        <taxon>Euarchontoglires</taxon>
        <taxon>Primates</taxon>
        <taxon>Haplorrhini</taxon>
        <taxon>Catarrhini</taxon>
        <taxon>Cercopithecidae</taxon>
        <taxon>Cercopithecinae</taxon>
        <taxon>Chlorocebus</taxon>
    </lineage>
</organism>
<reference key="1">
    <citation type="journal article" date="2002" name="Eur. J. Biochem.">
        <title>Mydj2 as a potent partner of hsc70 in mammalian cells.</title>
        <authorList>
            <person name="Bozidis P."/>
            <person name="Lazaridis I."/>
            <person name="Pagoulatos G.N."/>
            <person name="Angelidis C.E."/>
        </authorList>
    </citation>
    <scope>NUCLEOTIDE SEQUENCE [MRNA]</scope>
    <scope>FUNCTION</scope>
    <source>
        <tissue>Kidney</tissue>
    </source>
</reference>
<name>DNAJ1_CHLAE</name>